<gene>
    <name evidence="5" type="primary">btaE</name>
    <name evidence="7" type="ordered locus">BR0072</name>
    <name evidence="8" type="ordered locus">BS1330_I0072</name>
</gene>
<dbReference type="EMBL" id="AE014291">
    <property type="protein sequence ID" value="AAN29029.1"/>
    <property type="molecule type" value="Genomic_DNA"/>
</dbReference>
<dbReference type="EMBL" id="CP002997">
    <property type="protein sequence ID" value="AEM17441.1"/>
    <property type="molecule type" value="Genomic_DNA"/>
</dbReference>
<dbReference type="RefSeq" id="WP_006191142.1">
    <property type="nucleotide sequence ID" value="NZ_KN046804.1"/>
</dbReference>
<dbReference type="SMR" id="A0A0H3G586"/>
<dbReference type="GeneID" id="45051226"/>
<dbReference type="KEGG" id="bms:BR0072"/>
<dbReference type="KEGG" id="bsi:BS1330_I0072"/>
<dbReference type="HOGENOM" id="CLU_007476_0_0_5"/>
<dbReference type="Proteomes" id="UP000007104">
    <property type="component" value="Chromosome I"/>
</dbReference>
<dbReference type="GO" id="GO:0009279">
    <property type="term" value="C:cell outer membrane"/>
    <property type="evidence" value="ECO:0007669"/>
    <property type="project" value="UniProtKB-SubCell"/>
</dbReference>
<dbReference type="GO" id="GO:0009986">
    <property type="term" value="C:cell surface"/>
    <property type="evidence" value="ECO:0007669"/>
    <property type="project" value="UniProtKB-SubCell"/>
</dbReference>
<dbReference type="GO" id="GO:0007155">
    <property type="term" value="P:cell adhesion"/>
    <property type="evidence" value="ECO:0007669"/>
    <property type="project" value="UniProtKB-KW"/>
</dbReference>
<dbReference type="GO" id="GO:0015031">
    <property type="term" value="P:protein transport"/>
    <property type="evidence" value="ECO:0007669"/>
    <property type="project" value="UniProtKB-KW"/>
</dbReference>
<dbReference type="Gene3D" id="1.20.5.170">
    <property type="match status" value="1"/>
</dbReference>
<dbReference type="Gene3D" id="1.20.5.2280">
    <property type="match status" value="1"/>
</dbReference>
<dbReference type="Gene3D" id="2.20.70.140">
    <property type="match status" value="1"/>
</dbReference>
<dbReference type="Gene3D" id="6.10.250.2040">
    <property type="match status" value="1"/>
</dbReference>
<dbReference type="Gene3D" id="6.20.50.100">
    <property type="match status" value="1"/>
</dbReference>
<dbReference type="Gene3D" id="3.30.1300.30">
    <property type="entry name" value="GSPII I/J protein-like"/>
    <property type="match status" value="1"/>
</dbReference>
<dbReference type="Gene3D" id="2.150.10.10">
    <property type="entry name" value="Serralysin-like metalloprotease, C-terminal"/>
    <property type="match status" value="2"/>
</dbReference>
<dbReference type="InterPro" id="IPR008640">
    <property type="entry name" value="Adhesin_Head_dom"/>
</dbReference>
<dbReference type="InterPro" id="IPR008635">
    <property type="entry name" value="Coiled_stalk_dom"/>
</dbReference>
<dbReference type="InterPro" id="IPR045584">
    <property type="entry name" value="Pilin-like"/>
</dbReference>
<dbReference type="InterPro" id="IPR011049">
    <property type="entry name" value="Serralysin-like_metalloprot_C"/>
</dbReference>
<dbReference type="InterPro" id="IPR005594">
    <property type="entry name" value="YadA_C"/>
</dbReference>
<dbReference type="Pfam" id="PF03895">
    <property type="entry name" value="YadA_anchor"/>
    <property type="match status" value="1"/>
</dbReference>
<dbReference type="Pfam" id="PF05658">
    <property type="entry name" value="YadA_head"/>
    <property type="match status" value="5"/>
</dbReference>
<dbReference type="Pfam" id="PF05662">
    <property type="entry name" value="YadA_stalk"/>
    <property type="match status" value="4"/>
</dbReference>
<dbReference type="SUPFAM" id="SSF101967">
    <property type="entry name" value="Adhesin YadA, collagen-binding domain"/>
    <property type="match status" value="4"/>
</dbReference>
<dbReference type="SUPFAM" id="SSF54523">
    <property type="entry name" value="Pili subunits"/>
    <property type="match status" value="1"/>
</dbReference>
<comment type="function">
    <text evidence="4">Binds to hyaluronic acid and epithelial cells, and is required for full virulence in the mouse model.</text>
</comment>
<comment type="subunit">
    <text evidence="2">Homotrimer.</text>
</comment>
<comment type="subcellular location">
    <subcellularLocation>
        <location evidence="4">Cell surface</location>
    </subcellularLocation>
    <subcellularLocation>
        <location evidence="2">Cell outer membrane</location>
    </subcellularLocation>
    <text evidence="2 4">The C-terminal translocator domain is localized in the outer membrane and the passenger domain is at the cell surface (By similarity). Localizes at the new cell pole generated after cell division (PubMed:23319562).</text>
</comment>
<comment type="domain">
    <text evidence="2">The signal peptide, cleaved at the inner membrane, guides the autotransporter protein to the periplasmic space. Then, insertion of the C-terminal translocator domain in the outer membrane forms a hydrophilic pore for the translocation of the passenger domain to the bacterial cell surface.</text>
</comment>
<comment type="disruption phenotype">
    <text evidence="4">Deletion mutant exhibits a reduction in the adhesion to HeLa and A549 epithelial cells compared with the wild-type strain. Shows an attenuated phenotype in the mouse model.</text>
</comment>
<comment type="similarity">
    <text evidence="6">Belongs to the autotransporter-2 (AT-2) (TC 1.B.40) family.</text>
</comment>
<keyword id="KW-0130">Cell adhesion</keyword>
<keyword id="KW-0998">Cell outer membrane</keyword>
<keyword id="KW-0472">Membrane</keyword>
<keyword id="KW-0653">Protein transport</keyword>
<keyword id="KW-0732">Signal</keyword>
<keyword id="KW-0812">Transmembrane</keyword>
<keyword id="KW-1134">Transmembrane beta strand</keyword>
<keyword id="KW-0813">Transport</keyword>
<keyword id="KW-0843">Virulence</keyword>
<accession>A0A0H3G586</accession>
<protein>
    <recommendedName>
        <fullName evidence="6">Autotransporter adhesin BtaE</fullName>
    </recommendedName>
    <alternativeName>
        <fullName evidence="5">Brucella trimeric autotransporter</fullName>
    </alternativeName>
    <alternativeName>
        <fullName evidence="6">Type 5 secretion system autotransporter BtaE</fullName>
    </alternativeName>
</protein>
<feature type="signal peptide" evidence="3">
    <location>
        <begin position="1"/>
        <end position="11"/>
    </location>
</feature>
<feature type="chain" id="PRO_0000438297" description="Autotransporter adhesin BtaE">
    <location>
        <begin position="12"/>
        <end position="740"/>
    </location>
</feature>
<feature type="transmembrane region" description="Beta stranded" evidence="1">
    <location>
        <begin position="686"/>
        <end position="696"/>
    </location>
</feature>
<feature type="transmembrane region" description="Beta stranded" evidence="1">
    <location>
        <begin position="700"/>
        <end position="710"/>
    </location>
</feature>
<feature type="transmembrane region" description="Beta stranded" evidence="1">
    <location>
        <begin position="719"/>
        <end position="725"/>
    </location>
</feature>
<feature type="transmembrane region" description="Beta stranded" evidence="1">
    <location>
        <begin position="728"/>
        <end position="739"/>
    </location>
</feature>
<feature type="region of interest" description="Surface exposed passenger domain" evidence="2">
    <location>
        <begin position="12"/>
        <end position="647"/>
    </location>
</feature>
<feature type="region of interest" description="Outer membrane translocation of the passenger domain" evidence="2">
    <location>
        <begin position="648"/>
        <end position="686"/>
    </location>
</feature>
<feature type="region of interest" description="Translocator domain" evidence="2">
    <location>
        <begin position="687"/>
        <end position="740"/>
    </location>
</feature>
<organism>
    <name type="scientific">Brucella suis biovar 1 (strain 1330)</name>
    <dbReference type="NCBI Taxonomy" id="204722"/>
    <lineage>
        <taxon>Bacteria</taxon>
        <taxon>Pseudomonadati</taxon>
        <taxon>Pseudomonadota</taxon>
        <taxon>Alphaproteobacteria</taxon>
        <taxon>Hyphomicrobiales</taxon>
        <taxon>Brucellaceae</taxon>
        <taxon>Brucella/Ochrobactrum group</taxon>
        <taxon>Brucella</taxon>
    </lineage>
</organism>
<sequence length="740" mass="75453">MFGLSVNHAYAGPGIFINDGTDDGCIWTFDKEDYSPIGDYFGNTAPADKDSAGRNSPASVKYHIPSIQQLGGAATLKCLSKDRDTQTDRVLFYGNSKEQGSISLTLGGELFVNNGNLGLGGGTDTKAMRIGSMATLTGPSGLRSLAIGAGEIATVASGDDAIAIGTAAQAAHVGSIALGLQSTTELPSLVKDVTINGIKLSAFAGSNPASVLSIGNDTLKRSITNVGAGRVSKDSTDAVNGRQLFAVSEQAASGWSLTVNGMDKSRVGPGDTVDLSNSDGNLVLSKKGKDVTFNLASDLKVTSLVAGNTFLDTNGLVITGGPSMTVSGIDAGQLKISHVADGAVTVTSTDAVNGSQLHRVAHTIAEHLGGDAHVNADGSVIGPQYTVQKKRYKTIYDAFGGVDENLANINDILHDIESGGGIKYFHANSIGADSRALGTNSIAVGSDSVASGEGSISVGNGAQASAHGSVALGENAAAPDANSVALGAGSKTSEVVATKGTTINGQYYDFAGDAPSGTVSVGDKGAERTITNVAAGRISVESTDAVNGSQLNAVNQAIENLAAGVTENDKFSVKYDRHSDGTKKNSMTLQGWDSATPVVLANVADGVHKNDAVNVSQLKAGLSTTLGEAKAYTDQTALQTLDQANAYTDKKFGKLNEDIVATRIEARQAAAIGLAAASLRYDDRPGKISAAIGGGFWRGEGAVALGLGHTSEDQRMRSNLSAATSGGNWGMGAGFSYTFN</sequence>
<proteinExistence type="evidence at protein level"/>
<name>BTAE_BRUSU</name>
<evidence type="ECO:0000250" key="1">
    <source>
        <dbReference type="UniProtKB" id="A1JUB7"/>
    </source>
</evidence>
<evidence type="ECO:0000250" key="2">
    <source>
        <dbReference type="UniProtKB" id="P0C2W0"/>
    </source>
</evidence>
<evidence type="ECO:0000255" key="3"/>
<evidence type="ECO:0000269" key="4">
    <source>
    </source>
</evidence>
<evidence type="ECO:0000303" key="5">
    <source>
    </source>
</evidence>
<evidence type="ECO:0000305" key="6"/>
<evidence type="ECO:0000312" key="7">
    <source>
        <dbReference type="EMBL" id="AAN29029.1"/>
    </source>
</evidence>
<evidence type="ECO:0000312" key="8">
    <source>
        <dbReference type="EMBL" id="AEM17441.1"/>
    </source>
</evidence>
<reference key="1">
    <citation type="journal article" date="2002" name="Proc. Natl. Acad. Sci. U.S.A.">
        <title>The Brucella suis genome reveals fundamental similarities between animal and plant pathogens and symbionts.</title>
        <authorList>
            <person name="Paulsen I.T."/>
            <person name="Seshadri R."/>
            <person name="Nelson K.E."/>
            <person name="Eisen J.A."/>
            <person name="Heidelberg J.F."/>
            <person name="Read T.D."/>
            <person name="Dodson R.J."/>
            <person name="Umayam L.A."/>
            <person name="Brinkac L.M."/>
            <person name="Beanan M.J."/>
            <person name="Daugherty S.C."/>
            <person name="DeBoy R.T."/>
            <person name="Durkin A.S."/>
            <person name="Kolonay J.F."/>
            <person name="Madupu R."/>
            <person name="Nelson W.C."/>
            <person name="Ayodeji B."/>
            <person name="Kraul M."/>
            <person name="Shetty J."/>
            <person name="Malek J.A."/>
            <person name="Van Aken S.E."/>
            <person name="Riedmuller S."/>
            <person name="Tettelin H."/>
            <person name="Gill S.R."/>
            <person name="White O."/>
            <person name="Salzberg S.L."/>
            <person name="Hoover D.L."/>
            <person name="Lindler L.E."/>
            <person name="Halling S.M."/>
            <person name="Boyle S.M."/>
            <person name="Fraser C.M."/>
        </authorList>
    </citation>
    <scope>NUCLEOTIDE SEQUENCE [LARGE SCALE GENOMIC DNA]</scope>
    <source>
        <strain>1330</strain>
    </source>
</reference>
<reference key="2">
    <citation type="journal article" date="2011" name="J. Bacteriol.">
        <title>Revised genome sequence of Brucella suis 1330.</title>
        <authorList>
            <person name="Tae H."/>
            <person name="Shallom S."/>
            <person name="Settlage R."/>
            <person name="Preston D."/>
            <person name="Adams L.G."/>
            <person name="Garner H.R."/>
        </authorList>
    </citation>
    <scope>NUCLEOTIDE SEQUENCE [LARGE SCALE GENOMIC DNA]</scope>
    <source>
        <strain>1330</strain>
    </source>
</reference>
<reference key="3">
    <citation type="journal article" date="2013" name="Infect. Immun.">
        <title>BtaE, an adhesin that belongs to the trimeric autotransporter family, is required for full virulence and defines a specific adhesive pole of Brucella suis.</title>
        <authorList>
            <person name="Ruiz-Ranwez V."/>
            <person name="Posadas D.M."/>
            <person name="Van der Henst C."/>
            <person name="Estein S.M."/>
            <person name="Arocena G.M."/>
            <person name="Abdian P.L."/>
            <person name="Martin F.A."/>
            <person name="Sieira R."/>
            <person name="De Bolle X."/>
            <person name="Zorreguieta A."/>
        </authorList>
    </citation>
    <scope>FUNCTION AS AN ADHESIN</scope>
    <scope>SUBCELLULAR LOCATION</scope>
    <scope>DISRUPTION PHENOTYPE</scope>
</reference>